<feature type="chain" id="PRO_0000211608" description="Chromosome partition protein MukF">
    <location>
        <begin position="1"/>
        <end position="440"/>
    </location>
</feature>
<feature type="region of interest" description="Leucine-zipper">
    <location>
        <begin position="208"/>
        <end position="236"/>
    </location>
</feature>
<protein>
    <recommendedName>
        <fullName evidence="1">Chromosome partition protein MukF</fullName>
    </recommendedName>
</protein>
<gene>
    <name evidence="1" type="primary">mukF</name>
    <name type="ordered locus">plu1637</name>
</gene>
<dbReference type="EMBL" id="BX571864">
    <property type="protein sequence ID" value="CAE13930.1"/>
    <property type="molecule type" value="Genomic_DNA"/>
</dbReference>
<dbReference type="RefSeq" id="WP_011145928.1">
    <property type="nucleotide sequence ID" value="NC_005126.1"/>
</dbReference>
<dbReference type="SMR" id="Q7N6B9"/>
<dbReference type="STRING" id="243265.plu1637"/>
<dbReference type="GeneID" id="48847924"/>
<dbReference type="KEGG" id="plu:plu1637"/>
<dbReference type="eggNOG" id="COG3006">
    <property type="taxonomic scope" value="Bacteria"/>
</dbReference>
<dbReference type="HOGENOM" id="CLU_049853_0_0_6"/>
<dbReference type="OrthoDB" id="6450805at2"/>
<dbReference type="Proteomes" id="UP000002514">
    <property type="component" value="Chromosome"/>
</dbReference>
<dbReference type="GO" id="GO:0005737">
    <property type="term" value="C:cytoplasm"/>
    <property type="evidence" value="ECO:0007669"/>
    <property type="project" value="UniProtKB-UniRule"/>
</dbReference>
<dbReference type="GO" id="GO:0009295">
    <property type="term" value="C:nucleoid"/>
    <property type="evidence" value="ECO:0007669"/>
    <property type="project" value="UniProtKB-SubCell"/>
</dbReference>
<dbReference type="GO" id="GO:0005509">
    <property type="term" value="F:calcium ion binding"/>
    <property type="evidence" value="ECO:0007669"/>
    <property type="project" value="UniProtKB-UniRule"/>
</dbReference>
<dbReference type="GO" id="GO:0051301">
    <property type="term" value="P:cell division"/>
    <property type="evidence" value="ECO:0007669"/>
    <property type="project" value="UniProtKB-KW"/>
</dbReference>
<dbReference type="GO" id="GO:0030261">
    <property type="term" value="P:chromosome condensation"/>
    <property type="evidence" value="ECO:0007669"/>
    <property type="project" value="UniProtKB-KW"/>
</dbReference>
<dbReference type="GO" id="GO:0007059">
    <property type="term" value="P:chromosome segregation"/>
    <property type="evidence" value="ECO:0007669"/>
    <property type="project" value="UniProtKB-UniRule"/>
</dbReference>
<dbReference type="GO" id="GO:0006260">
    <property type="term" value="P:DNA replication"/>
    <property type="evidence" value="ECO:0007669"/>
    <property type="project" value="UniProtKB-UniRule"/>
</dbReference>
<dbReference type="CDD" id="cd16337">
    <property type="entry name" value="MukF_C"/>
    <property type="match status" value="1"/>
</dbReference>
<dbReference type="CDD" id="cd16335">
    <property type="entry name" value="MukF_N"/>
    <property type="match status" value="1"/>
</dbReference>
<dbReference type="Gene3D" id="1.20.58.590">
    <property type="entry name" value="Chromosome partition protein MukF, middle domain"/>
    <property type="match status" value="1"/>
</dbReference>
<dbReference type="Gene3D" id="1.10.225.40">
    <property type="entry name" value="MukF, C-terminal domain"/>
    <property type="match status" value="1"/>
</dbReference>
<dbReference type="Gene3D" id="1.10.10.10">
    <property type="entry name" value="Winged helix-like DNA-binding domain superfamily/Winged helix DNA-binding domain"/>
    <property type="match status" value="1"/>
</dbReference>
<dbReference type="HAMAP" id="MF_01803">
    <property type="entry name" value="MukF"/>
    <property type="match status" value="1"/>
</dbReference>
<dbReference type="InterPro" id="IPR005582">
    <property type="entry name" value="Chromosome_partition_MukF"/>
</dbReference>
<dbReference type="InterPro" id="IPR033441">
    <property type="entry name" value="MukF_C"/>
</dbReference>
<dbReference type="InterPro" id="IPR038198">
    <property type="entry name" value="MukF_C_sf"/>
</dbReference>
<dbReference type="InterPro" id="IPR033440">
    <property type="entry name" value="MukF_M"/>
</dbReference>
<dbReference type="InterPro" id="IPR036141">
    <property type="entry name" value="MukF_M_sp"/>
</dbReference>
<dbReference type="InterPro" id="IPR033439">
    <property type="entry name" value="MukF_WHTH"/>
</dbReference>
<dbReference type="InterPro" id="IPR036388">
    <property type="entry name" value="WH-like_DNA-bd_sf"/>
</dbReference>
<dbReference type="InterPro" id="IPR036390">
    <property type="entry name" value="WH_DNA-bd_sf"/>
</dbReference>
<dbReference type="NCBIfam" id="NF003615">
    <property type="entry name" value="PRK05260.1"/>
    <property type="match status" value="1"/>
</dbReference>
<dbReference type="Pfam" id="PF03882">
    <property type="entry name" value="KicB"/>
    <property type="match status" value="1"/>
</dbReference>
<dbReference type="Pfam" id="PF17193">
    <property type="entry name" value="MukF_C"/>
    <property type="match status" value="1"/>
</dbReference>
<dbReference type="Pfam" id="PF17192">
    <property type="entry name" value="MukF_M"/>
    <property type="match status" value="1"/>
</dbReference>
<dbReference type="PIRSF" id="PIRSF018282">
    <property type="entry name" value="MukF"/>
    <property type="match status" value="1"/>
</dbReference>
<dbReference type="SUPFAM" id="SSF140570">
    <property type="entry name" value="MukF C-terminal domain-like"/>
    <property type="match status" value="1"/>
</dbReference>
<dbReference type="SUPFAM" id="SSF46785">
    <property type="entry name" value="Winged helix' DNA-binding domain"/>
    <property type="match status" value="1"/>
</dbReference>
<keyword id="KW-0106">Calcium</keyword>
<keyword id="KW-0131">Cell cycle</keyword>
<keyword id="KW-0132">Cell division</keyword>
<keyword id="KW-0159">Chromosome partition</keyword>
<keyword id="KW-0963">Cytoplasm</keyword>
<keyword id="KW-0226">DNA condensation</keyword>
<keyword id="KW-1185">Reference proteome</keyword>
<name>MUKF_PHOLL</name>
<accession>Q7N6B9</accession>
<comment type="function">
    <text evidence="1">Involved in chromosome condensation, segregation and cell cycle progression. May participate in facilitating chromosome segregation by condensation DNA from both sides of a centrally located replisome during cell division. Not required for mini-F plasmid partitioning. Probably acts via its interaction with MukB and MukE. Overexpression results in anucleate cells. It has a calcium binding activity.</text>
</comment>
<comment type="subunit">
    <text evidence="1">Interacts, and probably forms a ternary complex, with MukE and MukB via its C-terminal region. The complex formation is stimulated by calcium or magnesium. It is required for an interaction between MukE and MukB.</text>
</comment>
<comment type="subcellular location">
    <subcellularLocation>
        <location evidence="1">Cytoplasm</location>
        <location evidence="1">Nucleoid</location>
    </subcellularLocation>
    <text evidence="1">Restricted to the nucleoid region.</text>
</comment>
<comment type="similarity">
    <text evidence="1">Belongs to the MukF family.</text>
</comment>
<organism>
    <name type="scientific">Photorhabdus laumondii subsp. laumondii (strain DSM 15139 / CIP 105565 / TT01)</name>
    <name type="common">Photorhabdus luminescens subsp. laumondii</name>
    <dbReference type="NCBI Taxonomy" id="243265"/>
    <lineage>
        <taxon>Bacteria</taxon>
        <taxon>Pseudomonadati</taxon>
        <taxon>Pseudomonadota</taxon>
        <taxon>Gammaproteobacteria</taxon>
        <taxon>Enterobacterales</taxon>
        <taxon>Morganellaceae</taxon>
        <taxon>Photorhabdus</taxon>
    </lineage>
</organism>
<evidence type="ECO:0000255" key="1">
    <source>
        <dbReference type="HAMAP-Rule" id="MF_01803"/>
    </source>
</evidence>
<proteinExistence type="inferred from homology"/>
<reference key="1">
    <citation type="journal article" date="2003" name="Nat. Biotechnol.">
        <title>The genome sequence of the entomopathogenic bacterium Photorhabdus luminescens.</title>
        <authorList>
            <person name="Duchaud E."/>
            <person name="Rusniok C."/>
            <person name="Frangeul L."/>
            <person name="Buchrieser C."/>
            <person name="Givaudan A."/>
            <person name="Taourit S."/>
            <person name="Bocs S."/>
            <person name="Boursaux-Eude C."/>
            <person name="Chandler M."/>
            <person name="Charles J.-F."/>
            <person name="Dassa E."/>
            <person name="Derose R."/>
            <person name="Derzelle S."/>
            <person name="Freyssinet G."/>
            <person name="Gaudriault S."/>
            <person name="Medigue C."/>
            <person name="Lanois A."/>
            <person name="Powell K."/>
            <person name="Siguier P."/>
            <person name="Vincent R."/>
            <person name="Wingate V."/>
            <person name="Zouine M."/>
            <person name="Glaser P."/>
            <person name="Boemare N."/>
            <person name="Danchin A."/>
            <person name="Kunst F."/>
        </authorList>
    </citation>
    <scope>NUCLEOTIDE SEQUENCE [LARGE SCALE GENOMIC DNA]</scope>
    <source>
        <strain>DSM 15139 / CIP 105565 / TT01</strain>
    </source>
</reference>
<sequence length="440" mass="50254">MSEYSQTVPELVSWARKNDFSISLPVERLAFLMAIAVLNSERLDGEMSESELVDAFREVCKGFEQTTESVAVRANNAINDMVRQKLLNRFTSELADNNAIYRLTPLGMGISDYYIRQREFSTLRLSMQLSVVASELHRAAEAAEEGGDEFHWHRNVFAPLKYSVAEIFDSIDMSQRVMDEQQSSVKEDIAALLNQDWQAAIANCEQLLSETSGTLRELQDTLEAAGDKLQANLLRIQEANMDSGGSELVDKLVFDLQSKLDRIISWGQQAIDLWIGYDRHVHKFIRTAIDMDKNRIFSQRLRQSVQHYFDNPWTLTIANAERLLDMRDEELTLRNEEVTGELPLALEYEEFSEINEQLAEMIEKALLIYRQEQRPLDLGAVLRDYLAQHPLSRHFDVARILVDQAVRLGVAEADFSGLPAEWLAINDYGAKVQAHVIDTY</sequence>